<reference key="1">
    <citation type="journal article" date="2005" name="Nature">
        <title>The genome of the social amoeba Dictyostelium discoideum.</title>
        <authorList>
            <person name="Eichinger L."/>
            <person name="Pachebat J.A."/>
            <person name="Gloeckner G."/>
            <person name="Rajandream M.A."/>
            <person name="Sucgang R."/>
            <person name="Berriman M."/>
            <person name="Song J."/>
            <person name="Olsen R."/>
            <person name="Szafranski K."/>
            <person name="Xu Q."/>
            <person name="Tunggal B."/>
            <person name="Kummerfeld S."/>
            <person name="Madera M."/>
            <person name="Konfortov B.A."/>
            <person name="Rivero F."/>
            <person name="Bankier A.T."/>
            <person name="Lehmann R."/>
            <person name="Hamlin N."/>
            <person name="Davies R."/>
            <person name="Gaudet P."/>
            <person name="Fey P."/>
            <person name="Pilcher K."/>
            <person name="Chen G."/>
            <person name="Saunders D."/>
            <person name="Sodergren E.J."/>
            <person name="Davis P."/>
            <person name="Kerhornou A."/>
            <person name="Nie X."/>
            <person name="Hall N."/>
            <person name="Anjard C."/>
            <person name="Hemphill L."/>
            <person name="Bason N."/>
            <person name="Farbrother P."/>
            <person name="Desany B."/>
            <person name="Just E."/>
            <person name="Morio T."/>
            <person name="Rost R."/>
            <person name="Churcher C.M."/>
            <person name="Cooper J."/>
            <person name="Haydock S."/>
            <person name="van Driessche N."/>
            <person name="Cronin A."/>
            <person name="Goodhead I."/>
            <person name="Muzny D.M."/>
            <person name="Mourier T."/>
            <person name="Pain A."/>
            <person name="Lu M."/>
            <person name="Harper D."/>
            <person name="Lindsay R."/>
            <person name="Hauser H."/>
            <person name="James K.D."/>
            <person name="Quiles M."/>
            <person name="Madan Babu M."/>
            <person name="Saito T."/>
            <person name="Buchrieser C."/>
            <person name="Wardroper A."/>
            <person name="Felder M."/>
            <person name="Thangavelu M."/>
            <person name="Johnson D."/>
            <person name="Knights A."/>
            <person name="Loulseged H."/>
            <person name="Mungall K.L."/>
            <person name="Oliver K."/>
            <person name="Price C."/>
            <person name="Quail M.A."/>
            <person name="Urushihara H."/>
            <person name="Hernandez J."/>
            <person name="Rabbinowitsch E."/>
            <person name="Steffen D."/>
            <person name="Sanders M."/>
            <person name="Ma J."/>
            <person name="Kohara Y."/>
            <person name="Sharp S."/>
            <person name="Simmonds M.N."/>
            <person name="Spiegler S."/>
            <person name="Tivey A."/>
            <person name="Sugano S."/>
            <person name="White B."/>
            <person name="Walker D."/>
            <person name="Woodward J.R."/>
            <person name="Winckler T."/>
            <person name="Tanaka Y."/>
            <person name="Shaulsky G."/>
            <person name="Schleicher M."/>
            <person name="Weinstock G.M."/>
            <person name="Rosenthal A."/>
            <person name="Cox E.C."/>
            <person name="Chisholm R.L."/>
            <person name="Gibbs R.A."/>
            <person name="Loomis W.F."/>
            <person name="Platzer M."/>
            <person name="Kay R.R."/>
            <person name="Williams J.G."/>
            <person name="Dear P.H."/>
            <person name="Noegel A.A."/>
            <person name="Barrell B.G."/>
            <person name="Kuspa A."/>
        </authorList>
    </citation>
    <scope>NUCLEOTIDE SEQUENCE [LARGE SCALE GENOMIC DNA]</scope>
    <source>
        <strain>AX4</strain>
    </source>
</reference>
<protein>
    <recommendedName>
        <fullName>Putative uncharacterized protein DDB_G0290167</fullName>
    </recommendedName>
</protein>
<gene>
    <name type="ORF">DDB_G0290167</name>
</gene>
<sequence length="52" mass="5853">MSIFKSLLSMGMNNSNSNSQSIVYNENRLNSFQSKNEIMVSISNPINPSQKK</sequence>
<proteinExistence type="predicted"/>
<dbReference type="EMBL" id="AAFI02000158">
    <property type="protein sequence ID" value="EAL62355.1"/>
    <property type="molecule type" value="Genomic_DNA"/>
</dbReference>
<dbReference type="RefSeq" id="XP_635857.1">
    <property type="nucleotide sequence ID" value="XM_630765.1"/>
</dbReference>
<dbReference type="PaxDb" id="44689-DDB0188754"/>
<dbReference type="EnsemblProtists" id="EAL62355">
    <property type="protein sequence ID" value="EAL62355"/>
    <property type="gene ID" value="DDB_G0290167"/>
</dbReference>
<dbReference type="GeneID" id="8627513"/>
<dbReference type="KEGG" id="ddi:DDB_G0290167"/>
<dbReference type="dictyBase" id="DDB_G0290167"/>
<dbReference type="HOGENOM" id="CLU_3091305_0_0_1"/>
<dbReference type="InParanoid" id="Q54GH1"/>
<dbReference type="PRO" id="PR:Q54GH1"/>
<dbReference type="Proteomes" id="UP000002195">
    <property type="component" value="Chromosome 5"/>
</dbReference>
<feature type="chain" id="PRO_0000346924" description="Putative uncharacterized protein DDB_G0290167">
    <location>
        <begin position="1"/>
        <end position="52"/>
    </location>
</feature>
<accession>Q54GH1</accession>
<organism>
    <name type="scientific">Dictyostelium discoideum</name>
    <name type="common">Social amoeba</name>
    <dbReference type="NCBI Taxonomy" id="44689"/>
    <lineage>
        <taxon>Eukaryota</taxon>
        <taxon>Amoebozoa</taxon>
        <taxon>Evosea</taxon>
        <taxon>Eumycetozoa</taxon>
        <taxon>Dictyostelia</taxon>
        <taxon>Dictyosteliales</taxon>
        <taxon>Dictyosteliaceae</taxon>
        <taxon>Dictyostelium</taxon>
    </lineage>
</organism>
<name>Y8754_DICDI</name>
<keyword id="KW-1185">Reference proteome</keyword>